<keyword id="KW-0007">Acetylation</keyword>
<keyword id="KW-0025">Alternative splicing</keyword>
<keyword id="KW-0963">Cytoplasm</keyword>
<keyword id="KW-0458">Lysosome</keyword>
<keyword id="KW-0472">Membrane</keyword>
<keyword id="KW-0597">Phosphoprotein</keyword>
<keyword id="KW-1185">Reference proteome</keyword>
<sequence length="1018" mass="112734">MEPREVKDRILENISLSVKKLQSYFAACEDETPAIRNHDKVLQRLCEHLDHALLYGLQDLSSGYWVLVVHFTRREAIRQIEVLQHVATNLGRSRAWLYLALNENSLESYLRLFQENLGLLQKYYVRNALVCSHDHLTLFLTLVSGLEFIRFDLDLDAPYLDLAPYMPDYYKPQYLLDFEDRLPSSVHGSDSLSLNSFNSVTSTNLEWDDSAIAPSSEDGDLTDTISGPRSTASDLTSSKTSTKSPTQRHNPFNEEQAETASSDTTPVHTTSQEKEEAQAPDQPDACTELEVIRVTKKKKIGKKKKTKLDEDASPLHPTSSQQKCGQQGEGDGLVGTPGLARDPSDTVLASPQEQGEGLSSTAGSSELSELSQMGLLIPEMKDTSMECLGQPLSKVIDKLHGQLDPSTWCSHADPPEQSFRAGSPGEAPEKPPFCDFSEGLPAPMDFYRFTVESPSTVAPGGGHHDPPGPSQPLHVPGSPAAALQEEEEGGRGEGQTSQPVEDRQGEEIQEPEPQEPDSQLPLVSQEPLVSQEPVPEPVSQPEPGTHEALCKLKRDQPSPCLSSAEDSGVEEGQGSPSEMTHPSEFRVDNNHLLLLMIHVFRENEEQLFKMIRMSTGHMEGNLQLLYVLLTDCYVYLLRKGATEKPYLVEEAVSYNELDYVSVGLDQQTVKLVCTNRRKQFLLDTADVALAELFLASLKSAMIKGCREPPYPSILTDATMEKLALAKFVAQESKCEASAVTVHFYGLVHWEDPMEEALGPVPCQCSPAEGTITKEGMLHYKASTSYLGKEHWKACFVVLSNGILYQYPDRTDVIPLLSVNMGGEQCGGCRRSNTTDRPHAFQVILADRPCLELSADSEAEMADWMQHLCQAVSKGVIPQGIAPSPCIPCCLVITEDRLFTCHEDCQTSFFRSLGTARLADITAISTELGKEYCVLEFSQDSPQLLQPWVIYLSCTSELDRFLTALSSGWKAIYQVDLPHKAIHEASIKQKFEDALSLIHSAWQRSDSLCRGRASRDPWC</sequence>
<comment type="function">
    <text evidence="2">Plays a role in lysosomes movement and localization at the cell periphery acting as an effector of ARL8B. Required for ARL8B to exert its effects on lysosome location, recruits kinesin-1 to lysosomes and hence direct their movement toward microtubule plus ends. Binding to ARL8B provides a link from lysosomal membranes to plus-end-directed motility. Critical factor involved in NK cell-mediated cytotoxicity. Drives the polarization of cytolytic granules and microtubule-organizing centers (MTOCs) toward the immune synapse between effector NK lymphocytes and target cells. Required for maintenance of the Golgi apparatus organization. May play a role in membrane tubulation.</text>
</comment>
<comment type="subunit">
    <text evidence="2">Interacts with KLC2 (via TPR repeats). Interacts with KIF5B. Interacts with BORCS5. Interacts (via RUN domain) with ARL8B (GTP-bound form); PLEKHM1 and PLEKHM2 compete for interaction with ARL8B. Interacts with ARL8A.</text>
</comment>
<comment type="subcellular location">
    <subcellularLocation>
        <location evidence="2">Cytoplasm</location>
    </subcellularLocation>
    <subcellularLocation>
        <location evidence="2">Lysosome membrane</location>
        <topology evidence="2">Peripheral membrane protein</topology>
        <orientation evidence="2">Cytoplasmic side</orientation>
    </subcellularLocation>
</comment>
<comment type="alternative products">
    <event type="alternative splicing"/>
    <isoform>
        <id>Q80TQ5-1</id>
        <name>1</name>
        <sequence type="displayed"/>
    </isoform>
    <isoform>
        <id>Q80TQ5-2</id>
        <name>2</name>
        <sequence type="described" ref="VSP_029163 VSP_029164"/>
    </isoform>
    <isoform>
        <id>Q80TQ5-3</id>
        <name>3</name>
        <sequence type="described" ref="VSP_029162 VSP_029163 VSP_029164"/>
    </isoform>
</comment>
<comment type="sequence caution" evidence="8">
    <conflict type="erroneous initiation">
        <sequence resource="EMBL-CDS" id="BAC65668"/>
    </conflict>
    <text>Extended N-terminus.</text>
</comment>
<name>PKHM2_MOUSE</name>
<accession>Q80TQ5</accession>
<accession>A2ADE1</accession>
<accession>Q3U0Q7</accession>
<accession>Q6PD22</accession>
<feature type="chain" id="PRO_0000309456" description="Pleckstrin homology domain-containing family M member 2">
    <location>
        <begin position="1"/>
        <end position="1018"/>
    </location>
</feature>
<feature type="domain" description="RUN" evidence="4">
    <location>
        <begin position="36"/>
        <end position="158"/>
    </location>
</feature>
<feature type="domain" description="PH" evidence="3">
    <location>
        <begin position="770"/>
        <end position="872"/>
    </location>
</feature>
<feature type="region of interest" description="Interaction with KIF5B" evidence="1">
    <location>
        <begin position="1"/>
        <end position="289"/>
    </location>
</feature>
<feature type="region of interest" description="Disordered" evidence="5">
    <location>
        <begin position="210"/>
        <end position="367"/>
    </location>
</feature>
<feature type="region of interest" description="Disordered" evidence="5">
    <location>
        <begin position="407"/>
        <end position="440"/>
    </location>
</feature>
<feature type="region of interest" description="Disordered" evidence="5">
    <location>
        <begin position="452"/>
        <end position="520"/>
    </location>
</feature>
<feature type="region of interest" description="Disordered" evidence="5">
    <location>
        <begin position="526"/>
        <end position="545"/>
    </location>
</feature>
<feature type="region of interest" description="Disordered" evidence="5">
    <location>
        <begin position="555"/>
        <end position="583"/>
    </location>
</feature>
<feature type="compositionally biased region" description="Low complexity" evidence="5">
    <location>
        <begin position="230"/>
        <end position="245"/>
    </location>
</feature>
<feature type="compositionally biased region" description="Polar residues" evidence="5">
    <location>
        <begin position="258"/>
        <end position="270"/>
    </location>
</feature>
<feature type="compositionally biased region" description="Basic residues" evidence="5">
    <location>
        <begin position="294"/>
        <end position="306"/>
    </location>
</feature>
<feature type="compositionally biased region" description="Polar residues" evidence="5">
    <location>
        <begin position="316"/>
        <end position="325"/>
    </location>
</feature>
<feature type="compositionally biased region" description="Polar residues" evidence="5">
    <location>
        <begin position="347"/>
        <end position="367"/>
    </location>
</feature>
<feature type="modified residue" description="N-acetylmethionine" evidence="2">
    <location>
        <position position="1"/>
    </location>
</feature>
<feature type="modified residue" description="Phosphoserine" evidence="10">
    <location>
        <position position="423"/>
    </location>
</feature>
<feature type="splice variant" id="VSP_029162" description="In isoform 3." evidence="7">
    <location>
        <begin position="1"/>
        <end position="165"/>
    </location>
</feature>
<feature type="splice variant" id="VSP_029163" description="In isoform 2 and isoform 3." evidence="6 7">
    <original>E</original>
    <variation>EDYDFGDVFPAVPSVPSTDWE</variation>
    <location>
        <position position="217"/>
    </location>
</feature>
<feature type="splice variant" id="VSP_029164" description="In isoform 2 and isoform 3." evidence="6 7">
    <location>
        <begin position="527"/>
        <end position="532"/>
    </location>
</feature>
<feature type="sequence conflict" description="In Ref. 3; CAM19908 and 4; AAH58984." evidence="8" ref="3 4">
    <original>G</original>
    <variation>GG</variation>
    <location>
        <position position="490"/>
    </location>
</feature>
<feature type="sequence conflict" description="In Ref. 3; CAM19908 and 4; AAH58984." evidence="8" ref="3 4">
    <original>V</original>
    <variation>L</variation>
    <location>
        <position position="500"/>
    </location>
</feature>
<feature type="sequence conflict" description="In Ref. 4; AAH58984." evidence="8" ref="4">
    <original>R</original>
    <variation>L</variation>
    <location>
        <position position="612"/>
    </location>
</feature>
<evidence type="ECO:0000250" key="1"/>
<evidence type="ECO:0000250" key="2">
    <source>
        <dbReference type="UniProtKB" id="Q8IWE5"/>
    </source>
</evidence>
<evidence type="ECO:0000255" key="3">
    <source>
        <dbReference type="PROSITE-ProRule" id="PRU00145"/>
    </source>
</evidence>
<evidence type="ECO:0000255" key="4">
    <source>
        <dbReference type="PROSITE-ProRule" id="PRU00178"/>
    </source>
</evidence>
<evidence type="ECO:0000256" key="5">
    <source>
        <dbReference type="SAM" id="MobiDB-lite"/>
    </source>
</evidence>
<evidence type="ECO:0000303" key="6">
    <source>
    </source>
</evidence>
<evidence type="ECO:0000303" key="7">
    <source>
    </source>
</evidence>
<evidence type="ECO:0000305" key="8"/>
<evidence type="ECO:0000312" key="9">
    <source>
        <dbReference type="MGI" id="MGI:1916832"/>
    </source>
</evidence>
<evidence type="ECO:0007744" key="10">
    <source>
    </source>
</evidence>
<proteinExistence type="evidence at protein level"/>
<reference key="1">
    <citation type="journal article" date="2003" name="DNA Res.">
        <title>Prediction of the coding sequences of mouse homologues of KIAA gene: II. The complete nucleotide sequences of 400 mouse KIAA-homologous cDNAs identified by screening of terminal sequences of cDNA clones randomly sampled from size-fractionated libraries.</title>
        <authorList>
            <person name="Okazaki N."/>
            <person name="Kikuno R."/>
            <person name="Ohara R."/>
            <person name="Inamoto S."/>
            <person name="Aizawa H."/>
            <person name="Yuasa S."/>
            <person name="Nakajima D."/>
            <person name="Nagase T."/>
            <person name="Ohara O."/>
            <person name="Koga H."/>
        </authorList>
    </citation>
    <scope>NUCLEOTIDE SEQUENCE [LARGE SCALE MRNA] (ISOFORM 1)</scope>
    <source>
        <tissue>Brain</tissue>
    </source>
</reference>
<reference key="2">
    <citation type="journal article" date="2005" name="Science">
        <title>The transcriptional landscape of the mammalian genome.</title>
        <authorList>
            <person name="Carninci P."/>
            <person name="Kasukawa T."/>
            <person name="Katayama S."/>
            <person name="Gough J."/>
            <person name="Frith M.C."/>
            <person name="Maeda N."/>
            <person name="Oyama R."/>
            <person name="Ravasi T."/>
            <person name="Lenhard B."/>
            <person name="Wells C."/>
            <person name="Kodzius R."/>
            <person name="Shimokawa K."/>
            <person name="Bajic V.B."/>
            <person name="Brenner S.E."/>
            <person name="Batalov S."/>
            <person name="Forrest A.R."/>
            <person name="Zavolan M."/>
            <person name="Davis M.J."/>
            <person name="Wilming L.G."/>
            <person name="Aidinis V."/>
            <person name="Allen J.E."/>
            <person name="Ambesi-Impiombato A."/>
            <person name="Apweiler R."/>
            <person name="Aturaliya R.N."/>
            <person name="Bailey T.L."/>
            <person name="Bansal M."/>
            <person name="Baxter L."/>
            <person name="Beisel K.W."/>
            <person name="Bersano T."/>
            <person name="Bono H."/>
            <person name="Chalk A.M."/>
            <person name="Chiu K.P."/>
            <person name="Choudhary V."/>
            <person name="Christoffels A."/>
            <person name="Clutterbuck D.R."/>
            <person name="Crowe M.L."/>
            <person name="Dalla E."/>
            <person name="Dalrymple B.P."/>
            <person name="de Bono B."/>
            <person name="Della Gatta G."/>
            <person name="di Bernardo D."/>
            <person name="Down T."/>
            <person name="Engstrom P."/>
            <person name="Fagiolini M."/>
            <person name="Faulkner G."/>
            <person name="Fletcher C.F."/>
            <person name="Fukushima T."/>
            <person name="Furuno M."/>
            <person name="Futaki S."/>
            <person name="Gariboldi M."/>
            <person name="Georgii-Hemming P."/>
            <person name="Gingeras T.R."/>
            <person name="Gojobori T."/>
            <person name="Green R.E."/>
            <person name="Gustincich S."/>
            <person name="Harbers M."/>
            <person name="Hayashi Y."/>
            <person name="Hensch T.K."/>
            <person name="Hirokawa N."/>
            <person name="Hill D."/>
            <person name="Huminiecki L."/>
            <person name="Iacono M."/>
            <person name="Ikeo K."/>
            <person name="Iwama A."/>
            <person name="Ishikawa T."/>
            <person name="Jakt M."/>
            <person name="Kanapin A."/>
            <person name="Katoh M."/>
            <person name="Kawasawa Y."/>
            <person name="Kelso J."/>
            <person name="Kitamura H."/>
            <person name="Kitano H."/>
            <person name="Kollias G."/>
            <person name="Krishnan S.P."/>
            <person name="Kruger A."/>
            <person name="Kummerfeld S.K."/>
            <person name="Kurochkin I.V."/>
            <person name="Lareau L.F."/>
            <person name="Lazarevic D."/>
            <person name="Lipovich L."/>
            <person name="Liu J."/>
            <person name="Liuni S."/>
            <person name="McWilliam S."/>
            <person name="Madan Babu M."/>
            <person name="Madera M."/>
            <person name="Marchionni L."/>
            <person name="Matsuda H."/>
            <person name="Matsuzawa S."/>
            <person name="Miki H."/>
            <person name="Mignone F."/>
            <person name="Miyake S."/>
            <person name="Morris K."/>
            <person name="Mottagui-Tabar S."/>
            <person name="Mulder N."/>
            <person name="Nakano N."/>
            <person name="Nakauchi H."/>
            <person name="Ng P."/>
            <person name="Nilsson R."/>
            <person name="Nishiguchi S."/>
            <person name="Nishikawa S."/>
            <person name="Nori F."/>
            <person name="Ohara O."/>
            <person name="Okazaki Y."/>
            <person name="Orlando V."/>
            <person name="Pang K.C."/>
            <person name="Pavan W.J."/>
            <person name="Pavesi G."/>
            <person name="Pesole G."/>
            <person name="Petrovsky N."/>
            <person name="Piazza S."/>
            <person name="Reed J."/>
            <person name="Reid J.F."/>
            <person name="Ring B.Z."/>
            <person name="Ringwald M."/>
            <person name="Rost B."/>
            <person name="Ruan Y."/>
            <person name="Salzberg S.L."/>
            <person name="Sandelin A."/>
            <person name="Schneider C."/>
            <person name="Schoenbach C."/>
            <person name="Sekiguchi K."/>
            <person name="Semple C.A."/>
            <person name="Seno S."/>
            <person name="Sessa L."/>
            <person name="Sheng Y."/>
            <person name="Shibata Y."/>
            <person name="Shimada H."/>
            <person name="Shimada K."/>
            <person name="Silva D."/>
            <person name="Sinclair B."/>
            <person name="Sperling S."/>
            <person name="Stupka E."/>
            <person name="Sugiura K."/>
            <person name="Sultana R."/>
            <person name="Takenaka Y."/>
            <person name="Taki K."/>
            <person name="Tammoja K."/>
            <person name="Tan S.L."/>
            <person name="Tang S."/>
            <person name="Taylor M.S."/>
            <person name="Tegner J."/>
            <person name="Teichmann S.A."/>
            <person name="Ueda H.R."/>
            <person name="van Nimwegen E."/>
            <person name="Verardo R."/>
            <person name="Wei C.L."/>
            <person name="Yagi K."/>
            <person name="Yamanishi H."/>
            <person name="Zabarovsky E."/>
            <person name="Zhu S."/>
            <person name="Zimmer A."/>
            <person name="Hide W."/>
            <person name="Bult C."/>
            <person name="Grimmond S.M."/>
            <person name="Teasdale R.D."/>
            <person name="Liu E.T."/>
            <person name="Brusic V."/>
            <person name="Quackenbush J."/>
            <person name="Wahlestedt C."/>
            <person name="Mattick J.S."/>
            <person name="Hume D.A."/>
            <person name="Kai C."/>
            <person name="Sasaki D."/>
            <person name="Tomaru Y."/>
            <person name="Fukuda S."/>
            <person name="Kanamori-Katayama M."/>
            <person name="Suzuki M."/>
            <person name="Aoki J."/>
            <person name="Arakawa T."/>
            <person name="Iida J."/>
            <person name="Imamura K."/>
            <person name="Itoh M."/>
            <person name="Kato T."/>
            <person name="Kawaji H."/>
            <person name="Kawagashira N."/>
            <person name="Kawashima T."/>
            <person name="Kojima M."/>
            <person name="Kondo S."/>
            <person name="Konno H."/>
            <person name="Nakano K."/>
            <person name="Ninomiya N."/>
            <person name="Nishio T."/>
            <person name="Okada M."/>
            <person name="Plessy C."/>
            <person name="Shibata K."/>
            <person name="Shiraki T."/>
            <person name="Suzuki S."/>
            <person name="Tagami M."/>
            <person name="Waki K."/>
            <person name="Watahiki A."/>
            <person name="Okamura-Oho Y."/>
            <person name="Suzuki H."/>
            <person name="Kawai J."/>
            <person name="Hayashizaki Y."/>
        </authorList>
    </citation>
    <scope>NUCLEOTIDE SEQUENCE [LARGE SCALE MRNA] (ISOFORM 3)</scope>
    <source>
        <strain>NOD</strain>
        <tissue>Spleen</tissue>
    </source>
</reference>
<reference key="3">
    <citation type="journal article" date="2009" name="PLoS Biol.">
        <title>Lineage-specific biology revealed by a finished genome assembly of the mouse.</title>
        <authorList>
            <person name="Church D.M."/>
            <person name="Goodstadt L."/>
            <person name="Hillier L.W."/>
            <person name="Zody M.C."/>
            <person name="Goldstein S."/>
            <person name="She X."/>
            <person name="Bult C.J."/>
            <person name="Agarwala R."/>
            <person name="Cherry J.L."/>
            <person name="DiCuccio M."/>
            <person name="Hlavina W."/>
            <person name="Kapustin Y."/>
            <person name="Meric P."/>
            <person name="Maglott D."/>
            <person name="Birtle Z."/>
            <person name="Marques A.C."/>
            <person name="Graves T."/>
            <person name="Zhou S."/>
            <person name="Teague B."/>
            <person name="Potamousis K."/>
            <person name="Churas C."/>
            <person name="Place M."/>
            <person name="Herschleb J."/>
            <person name="Runnheim R."/>
            <person name="Forrest D."/>
            <person name="Amos-Landgraf J."/>
            <person name="Schwartz D.C."/>
            <person name="Cheng Z."/>
            <person name="Lindblad-Toh K."/>
            <person name="Eichler E.E."/>
            <person name="Ponting C.P."/>
        </authorList>
    </citation>
    <scope>NUCLEOTIDE SEQUENCE [LARGE SCALE GENOMIC DNA]</scope>
    <source>
        <strain>C57BL/6J</strain>
    </source>
</reference>
<reference key="4">
    <citation type="journal article" date="2004" name="Genome Res.">
        <title>The status, quality, and expansion of the NIH full-length cDNA project: the Mammalian Gene Collection (MGC).</title>
        <authorList>
            <consortium name="The MGC Project Team"/>
        </authorList>
    </citation>
    <scope>NUCLEOTIDE SEQUENCE [LARGE SCALE MRNA] OF 73-1018 (ISOFORM 2)</scope>
    <source>
        <strain>C57BL/6J</strain>
        <tissue>Brain</tissue>
    </source>
</reference>
<reference key="5">
    <citation type="journal article" date="2010" name="Cell">
        <title>A tissue-specific atlas of mouse protein phosphorylation and expression.</title>
        <authorList>
            <person name="Huttlin E.L."/>
            <person name="Jedrychowski M.P."/>
            <person name="Elias J.E."/>
            <person name="Goswami T."/>
            <person name="Rad R."/>
            <person name="Beausoleil S.A."/>
            <person name="Villen J."/>
            <person name="Haas W."/>
            <person name="Sowa M.E."/>
            <person name="Gygi S.P."/>
        </authorList>
    </citation>
    <scope>PHOSPHORYLATION [LARGE SCALE ANALYSIS] AT SER-423</scope>
    <scope>IDENTIFICATION BY MASS SPECTROMETRY [LARGE SCALE ANALYSIS]</scope>
    <source>
        <tissue>Brain</tissue>
        <tissue>Heart</tissue>
        <tissue>Kidney</tissue>
        <tissue>Liver</tissue>
        <tissue>Lung</tissue>
        <tissue>Pancreas</tissue>
        <tissue>Testis</tissue>
    </source>
</reference>
<organism>
    <name type="scientific">Mus musculus</name>
    <name type="common">Mouse</name>
    <dbReference type="NCBI Taxonomy" id="10090"/>
    <lineage>
        <taxon>Eukaryota</taxon>
        <taxon>Metazoa</taxon>
        <taxon>Chordata</taxon>
        <taxon>Craniata</taxon>
        <taxon>Vertebrata</taxon>
        <taxon>Euteleostomi</taxon>
        <taxon>Mammalia</taxon>
        <taxon>Eutheria</taxon>
        <taxon>Euarchontoglires</taxon>
        <taxon>Glires</taxon>
        <taxon>Rodentia</taxon>
        <taxon>Myomorpha</taxon>
        <taxon>Muroidea</taxon>
        <taxon>Muridae</taxon>
        <taxon>Murinae</taxon>
        <taxon>Mus</taxon>
        <taxon>Mus</taxon>
    </lineage>
</organism>
<dbReference type="EMBL" id="AK122386">
    <property type="protein sequence ID" value="BAC65668.1"/>
    <property type="status" value="ALT_INIT"/>
    <property type="molecule type" value="mRNA"/>
</dbReference>
<dbReference type="EMBL" id="AK156652">
    <property type="protein sequence ID" value="BAE33794.1"/>
    <property type="molecule type" value="mRNA"/>
</dbReference>
<dbReference type="EMBL" id="AL670446">
    <property type="protein sequence ID" value="CAM19908.1"/>
    <property type="molecule type" value="Genomic_DNA"/>
</dbReference>
<dbReference type="EMBL" id="BC058984">
    <property type="protein sequence ID" value="AAH58984.1"/>
    <property type="molecule type" value="mRNA"/>
</dbReference>
<dbReference type="RefSeq" id="NP_001028322.1">
    <property type="nucleotide sequence ID" value="NM_001033150.1"/>
</dbReference>
<dbReference type="SMR" id="Q80TQ5"/>
<dbReference type="FunCoup" id="Q80TQ5">
    <property type="interactions" value="158"/>
</dbReference>
<dbReference type="STRING" id="10090.ENSMUSP00000081221"/>
<dbReference type="iPTMnet" id="Q80TQ5"/>
<dbReference type="PhosphoSitePlus" id="Q80TQ5"/>
<dbReference type="PaxDb" id="10090-ENSMUSP00000081221"/>
<dbReference type="PeptideAtlas" id="Q80TQ5"/>
<dbReference type="ProteomicsDB" id="289912">
    <molecule id="Q80TQ5-1"/>
</dbReference>
<dbReference type="ProteomicsDB" id="289913">
    <molecule id="Q80TQ5-2"/>
</dbReference>
<dbReference type="ProteomicsDB" id="289914">
    <molecule id="Q80TQ5-3"/>
</dbReference>
<dbReference type="Pumba" id="Q80TQ5"/>
<dbReference type="GeneID" id="69582"/>
<dbReference type="KEGG" id="mmu:69582"/>
<dbReference type="AGR" id="MGI:1916832"/>
<dbReference type="CTD" id="23207"/>
<dbReference type="MGI" id="MGI:1916832">
    <property type="gene designation" value="Plekhm2"/>
</dbReference>
<dbReference type="eggNOG" id="KOG4381">
    <property type="taxonomic scope" value="Eukaryota"/>
</dbReference>
<dbReference type="InParanoid" id="Q80TQ5"/>
<dbReference type="OrthoDB" id="9983817at2759"/>
<dbReference type="TreeFam" id="TF332641"/>
<dbReference type="BioGRID-ORCS" id="69582">
    <property type="hits" value="4 hits in 79 CRISPR screens"/>
</dbReference>
<dbReference type="ChiTaRS" id="Plekhm2">
    <property type="organism name" value="mouse"/>
</dbReference>
<dbReference type="PRO" id="PR:Q80TQ5"/>
<dbReference type="Proteomes" id="UP000000589">
    <property type="component" value="Unplaced"/>
</dbReference>
<dbReference type="RNAct" id="Q80TQ5">
    <property type="molecule type" value="protein"/>
</dbReference>
<dbReference type="GO" id="GO:0044754">
    <property type="term" value="C:autolysosome"/>
    <property type="evidence" value="ECO:0000250"/>
    <property type="project" value="UniProtKB"/>
</dbReference>
<dbReference type="GO" id="GO:0005765">
    <property type="term" value="C:lysosomal membrane"/>
    <property type="evidence" value="ECO:0000250"/>
    <property type="project" value="UniProtKB"/>
</dbReference>
<dbReference type="GO" id="GO:0005764">
    <property type="term" value="C:lysosome"/>
    <property type="evidence" value="ECO:0000250"/>
    <property type="project" value="UniProtKB"/>
</dbReference>
<dbReference type="GO" id="GO:0061909">
    <property type="term" value="P:autophagosome-lysosome fusion"/>
    <property type="evidence" value="ECO:0000250"/>
    <property type="project" value="UniProtKB"/>
</dbReference>
<dbReference type="GO" id="GO:1902774">
    <property type="term" value="P:late endosome to lysosome transport"/>
    <property type="evidence" value="ECO:0000250"/>
    <property type="project" value="UniProtKB"/>
</dbReference>
<dbReference type="GO" id="GO:0032418">
    <property type="term" value="P:lysosome localization"/>
    <property type="evidence" value="ECO:0000250"/>
    <property type="project" value="UniProtKB"/>
</dbReference>
<dbReference type="GO" id="GO:0042267">
    <property type="term" value="P:natural killer cell mediated cytotoxicity"/>
    <property type="evidence" value="ECO:0000250"/>
    <property type="project" value="UniProtKB"/>
</dbReference>
<dbReference type="CDD" id="cd13309">
    <property type="entry name" value="PH_SKIP"/>
    <property type="match status" value="1"/>
</dbReference>
<dbReference type="CDD" id="cd17680">
    <property type="entry name" value="RUN_PLEKHM2"/>
    <property type="match status" value="1"/>
</dbReference>
<dbReference type="FunFam" id="2.30.29.30:FF:000148">
    <property type="entry name" value="pleckstrin homology domain-containing family M member 2"/>
    <property type="match status" value="1"/>
</dbReference>
<dbReference type="FunFam" id="1.20.58.900:FF:000004">
    <property type="entry name" value="pleckstrin homology domain-containing family M member 2 isoform X2"/>
    <property type="match status" value="1"/>
</dbReference>
<dbReference type="Gene3D" id="1.20.58.900">
    <property type="match status" value="1"/>
</dbReference>
<dbReference type="Gene3D" id="2.30.29.30">
    <property type="entry name" value="Pleckstrin-homology domain (PH domain)/Phosphotyrosine-binding domain (PTB)"/>
    <property type="match status" value="1"/>
</dbReference>
<dbReference type="InterPro" id="IPR011993">
    <property type="entry name" value="PH-like_dom_sf"/>
</dbReference>
<dbReference type="InterPro" id="IPR001849">
    <property type="entry name" value="PH_domain"/>
</dbReference>
<dbReference type="InterPro" id="IPR053015">
    <property type="entry name" value="PH_domain-containing_M2"/>
</dbReference>
<dbReference type="InterPro" id="IPR004012">
    <property type="entry name" value="Run_dom"/>
</dbReference>
<dbReference type="InterPro" id="IPR037213">
    <property type="entry name" value="Run_dom_sf"/>
</dbReference>
<dbReference type="InterPro" id="IPR047327">
    <property type="entry name" value="RUN_PLEKHM2"/>
</dbReference>
<dbReference type="PANTHER" id="PTHR46556">
    <property type="entry name" value="PLECKSTRIN HOMOLOGY DOMAIN-CONTAINING FAMILY M MEMBER 2"/>
    <property type="match status" value="1"/>
</dbReference>
<dbReference type="PANTHER" id="PTHR46556:SF1">
    <property type="entry name" value="PLECKSTRIN HOMOLOGY DOMAIN-CONTAINING FAMILY M MEMBER 2"/>
    <property type="match status" value="1"/>
</dbReference>
<dbReference type="Pfam" id="PF00169">
    <property type="entry name" value="PH"/>
    <property type="match status" value="1"/>
</dbReference>
<dbReference type="Pfam" id="PF23142">
    <property type="entry name" value="PH_PLEKHM2"/>
    <property type="match status" value="1"/>
</dbReference>
<dbReference type="Pfam" id="PF02759">
    <property type="entry name" value="RUN"/>
    <property type="match status" value="1"/>
</dbReference>
<dbReference type="SMART" id="SM00233">
    <property type="entry name" value="PH"/>
    <property type="match status" value="1"/>
</dbReference>
<dbReference type="SMART" id="SM00593">
    <property type="entry name" value="RUN"/>
    <property type="match status" value="1"/>
</dbReference>
<dbReference type="SUPFAM" id="SSF50729">
    <property type="entry name" value="PH domain-like"/>
    <property type="match status" value="1"/>
</dbReference>
<dbReference type="SUPFAM" id="SSF140741">
    <property type="entry name" value="RUN domain-like"/>
    <property type="match status" value="1"/>
</dbReference>
<dbReference type="PROSITE" id="PS50003">
    <property type="entry name" value="PH_DOMAIN"/>
    <property type="match status" value="1"/>
</dbReference>
<dbReference type="PROSITE" id="PS50826">
    <property type="entry name" value="RUN"/>
    <property type="match status" value="1"/>
</dbReference>
<gene>
    <name evidence="9" type="primary">Plekhm2</name>
    <name type="synonym">Kiaa0842</name>
</gene>
<protein>
    <recommendedName>
        <fullName evidence="8">Pleckstrin homology domain-containing family M member 2</fullName>
        <shortName>PH domain-containing family M member 2</shortName>
    </recommendedName>
</protein>